<accession>Q21I40</accession>
<keyword id="KW-0030">Aminoacyl-tRNA synthetase</keyword>
<keyword id="KW-0067">ATP-binding</keyword>
<keyword id="KW-0963">Cytoplasm</keyword>
<keyword id="KW-0436">Ligase</keyword>
<keyword id="KW-0547">Nucleotide-binding</keyword>
<keyword id="KW-0648">Protein biosynthesis</keyword>
<keyword id="KW-1185">Reference proteome</keyword>
<feature type="chain" id="PRO_0000242086" description="Arginine--tRNA ligase">
    <location>
        <begin position="1"/>
        <end position="579"/>
    </location>
</feature>
<feature type="short sequence motif" description="'HIGH' region">
    <location>
        <begin position="123"/>
        <end position="133"/>
    </location>
</feature>
<proteinExistence type="inferred from homology"/>
<name>SYR_SACD2</name>
<organism>
    <name type="scientific">Saccharophagus degradans (strain 2-40 / ATCC 43961 / DSM 17024)</name>
    <dbReference type="NCBI Taxonomy" id="203122"/>
    <lineage>
        <taxon>Bacteria</taxon>
        <taxon>Pseudomonadati</taxon>
        <taxon>Pseudomonadota</taxon>
        <taxon>Gammaproteobacteria</taxon>
        <taxon>Cellvibrionales</taxon>
        <taxon>Cellvibrionaceae</taxon>
        <taxon>Saccharophagus</taxon>
    </lineage>
</organism>
<sequence>MNIRNLLNDRVKSAMNDAGIPADYSPHLAVSKKAGFGDYQANGAMGAAKALKTNPREVAQKIIDNLDLNGIASKVEIAGPGFINIHLDPKWLAQQTVAVTNSTNLGILPKNNPETVVIDYSSPNLAKEMHVGHLRSTIIGDAIARVLEFTGDKVIRQNHVGDWGTQFGMLIAELEDQLGSGERPELALQDLEGFYQQAKKHFDDDPAFADRARDYVVKLQSGDAQVNKLWQEFRRVSLLHAEEIYRKLNVTLGEADVRGESAYNDDLAPVVAELEAQGLAVEDQGAKVVFLHELADKNGDPSVAIIQKKDGGYLYSTSDLAALRYRVGTLKANRILYFIDARQSLHMQQVFTLARKAGFADEWLSTEHHAFGTMLGSDGKPFKTRSGGTVKLAQLLDEAVERAAKEVRTKNPDLTEEEMAEVASKVGIGAVKYADLCKTRTNDYVFNWESMLAFEGNTGPYMQYAYTRIRSIFRRANENMDTFESEVNLTEPQEVQLAIKLLQLPEIVEQIAADAYPHVMCNYLYDLASLFMTFYEACPILKEGVEPAVKTSRLQLSKGVARTLAQGLDLLGIEVMEKM</sequence>
<protein>
    <recommendedName>
        <fullName evidence="1">Arginine--tRNA ligase</fullName>
        <ecNumber evidence="1">6.1.1.19</ecNumber>
    </recommendedName>
    <alternativeName>
        <fullName evidence="1">Arginyl-tRNA synthetase</fullName>
        <shortName evidence="1">ArgRS</shortName>
    </alternativeName>
</protein>
<dbReference type="EC" id="6.1.1.19" evidence="1"/>
<dbReference type="EMBL" id="CP000282">
    <property type="protein sequence ID" value="ABD81639.1"/>
    <property type="molecule type" value="Genomic_DNA"/>
</dbReference>
<dbReference type="RefSeq" id="WP_011468856.1">
    <property type="nucleotide sequence ID" value="NC_007912.1"/>
</dbReference>
<dbReference type="SMR" id="Q21I40"/>
<dbReference type="STRING" id="203122.Sde_2379"/>
<dbReference type="GeneID" id="98614043"/>
<dbReference type="KEGG" id="sde:Sde_2379"/>
<dbReference type="eggNOG" id="COG0018">
    <property type="taxonomic scope" value="Bacteria"/>
</dbReference>
<dbReference type="HOGENOM" id="CLU_006406_5_1_6"/>
<dbReference type="OrthoDB" id="9803211at2"/>
<dbReference type="Proteomes" id="UP000001947">
    <property type="component" value="Chromosome"/>
</dbReference>
<dbReference type="GO" id="GO:0005737">
    <property type="term" value="C:cytoplasm"/>
    <property type="evidence" value="ECO:0007669"/>
    <property type="project" value="UniProtKB-SubCell"/>
</dbReference>
<dbReference type="GO" id="GO:0004814">
    <property type="term" value="F:arginine-tRNA ligase activity"/>
    <property type="evidence" value="ECO:0007669"/>
    <property type="project" value="UniProtKB-UniRule"/>
</dbReference>
<dbReference type="GO" id="GO:0005524">
    <property type="term" value="F:ATP binding"/>
    <property type="evidence" value="ECO:0007669"/>
    <property type="project" value="UniProtKB-UniRule"/>
</dbReference>
<dbReference type="GO" id="GO:0006420">
    <property type="term" value="P:arginyl-tRNA aminoacylation"/>
    <property type="evidence" value="ECO:0007669"/>
    <property type="project" value="UniProtKB-UniRule"/>
</dbReference>
<dbReference type="CDD" id="cd07956">
    <property type="entry name" value="Anticodon_Ia_Arg"/>
    <property type="match status" value="1"/>
</dbReference>
<dbReference type="CDD" id="cd00671">
    <property type="entry name" value="ArgRS_core"/>
    <property type="match status" value="1"/>
</dbReference>
<dbReference type="FunFam" id="1.10.730.10:FF:000008">
    <property type="entry name" value="Arginine--tRNA ligase"/>
    <property type="match status" value="1"/>
</dbReference>
<dbReference type="FunFam" id="3.40.50.620:FF:000030">
    <property type="entry name" value="Arginine--tRNA ligase"/>
    <property type="match status" value="1"/>
</dbReference>
<dbReference type="Gene3D" id="3.30.1360.70">
    <property type="entry name" value="Arginyl tRNA synthetase N-terminal domain"/>
    <property type="match status" value="1"/>
</dbReference>
<dbReference type="Gene3D" id="3.40.50.620">
    <property type="entry name" value="HUPs"/>
    <property type="match status" value="1"/>
</dbReference>
<dbReference type="Gene3D" id="1.10.730.10">
    <property type="entry name" value="Isoleucyl-tRNA Synthetase, Domain 1"/>
    <property type="match status" value="1"/>
</dbReference>
<dbReference type="HAMAP" id="MF_00123">
    <property type="entry name" value="Arg_tRNA_synth"/>
    <property type="match status" value="1"/>
</dbReference>
<dbReference type="InterPro" id="IPR001412">
    <property type="entry name" value="aa-tRNA-synth_I_CS"/>
</dbReference>
<dbReference type="InterPro" id="IPR001278">
    <property type="entry name" value="Arg-tRNA-ligase"/>
</dbReference>
<dbReference type="InterPro" id="IPR005148">
    <property type="entry name" value="Arg-tRNA-synth_N"/>
</dbReference>
<dbReference type="InterPro" id="IPR036695">
    <property type="entry name" value="Arg-tRNA-synth_N_sf"/>
</dbReference>
<dbReference type="InterPro" id="IPR035684">
    <property type="entry name" value="ArgRS_core"/>
</dbReference>
<dbReference type="InterPro" id="IPR008909">
    <property type="entry name" value="DALR_anticod-bd"/>
</dbReference>
<dbReference type="InterPro" id="IPR014729">
    <property type="entry name" value="Rossmann-like_a/b/a_fold"/>
</dbReference>
<dbReference type="InterPro" id="IPR009080">
    <property type="entry name" value="tRNAsynth_Ia_anticodon-bd"/>
</dbReference>
<dbReference type="NCBIfam" id="TIGR00456">
    <property type="entry name" value="argS"/>
    <property type="match status" value="1"/>
</dbReference>
<dbReference type="PANTHER" id="PTHR11956:SF5">
    <property type="entry name" value="ARGININE--TRNA LIGASE, CYTOPLASMIC"/>
    <property type="match status" value="1"/>
</dbReference>
<dbReference type="PANTHER" id="PTHR11956">
    <property type="entry name" value="ARGINYL-TRNA SYNTHETASE"/>
    <property type="match status" value="1"/>
</dbReference>
<dbReference type="Pfam" id="PF03485">
    <property type="entry name" value="Arg_tRNA_synt_N"/>
    <property type="match status" value="1"/>
</dbReference>
<dbReference type="Pfam" id="PF05746">
    <property type="entry name" value="DALR_1"/>
    <property type="match status" value="1"/>
</dbReference>
<dbReference type="Pfam" id="PF00750">
    <property type="entry name" value="tRNA-synt_1d"/>
    <property type="match status" value="1"/>
</dbReference>
<dbReference type="PRINTS" id="PR01038">
    <property type="entry name" value="TRNASYNTHARG"/>
</dbReference>
<dbReference type="SMART" id="SM01016">
    <property type="entry name" value="Arg_tRNA_synt_N"/>
    <property type="match status" value="1"/>
</dbReference>
<dbReference type="SMART" id="SM00836">
    <property type="entry name" value="DALR_1"/>
    <property type="match status" value="1"/>
</dbReference>
<dbReference type="SUPFAM" id="SSF47323">
    <property type="entry name" value="Anticodon-binding domain of a subclass of class I aminoacyl-tRNA synthetases"/>
    <property type="match status" value="1"/>
</dbReference>
<dbReference type="SUPFAM" id="SSF55190">
    <property type="entry name" value="Arginyl-tRNA synthetase (ArgRS), N-terminal 'additional' domain"/>
    <property type="match status" value="1"/>
</dbReference>
<dbReference type="SUPFAM" id="SSF52374">
    <property type="entry name" value="Nucleotidylyl transferase"/>
    <property type="match status" value="1"/>
</dbReference>
<dbReference type="PROSITE" id="PS00178">
    <property type="entry name" value="AA_TRNA_LIGASE_I"/>
    <property type="match status" value="1"/>
</dbReference>
<reference key="1">
    <citation type="journal article" date="2008" name="PLoS Genet.">
        <title>Complete genome sequence of the complex carbohydrate-degrading marine bacterium, Saccharophagus degradans strain 2-40 T.</title>
        <authorList>
            <person name="Weiner R.M."/>
            <person name="Taylor L.E. II"/>
            <person name="Henrissat B."/>
            <person name="Hauser L."/>
            <person name="Land M."/>
            <person name="Coutinho P.M."/>
            <person name="Rancurel C."/>
            <person name="Saunders E.H."/>
            <person name="Longmire A.G."/>
            <person name="Zhang H."/>
            <person name="Bayer E.A."/>
            <person name="Gilbert H.J."/>
            <person name="Larimer F."/>
            <person name="Zhulin I.B."/>
            <person name="Ekborg N.A."/>
            <person name="Lamed R."/>
            <person name="Richardson P.M."/>
            <person name="Borovok I."/>
            <person name="Hutcheson S."/>
        </authorList>
    </citation>
    <scope>NUCLEOTIDE SEQUENCE [LARGE SCALE GENOMIC DNA]</scope>
    <source>
        <strain>2-40 / ATCC 43961 / DSM 17024</strain>
    </source>
</reference>
<comment type="catalytic activity">
    <reaction evidence="1">
        <text>tRNA(Arg) + L-arginine + ATP = L-arginyl-tRNA(Arg) + AMP + diphosphate</text>
        <dbReference type="Rhea" id="RHEA:20301"/>
        <dbReference type="Rhea" id="RHEA-COMP:9658"/>
        <dbReference type="Rhea" id="RHEA-COMP:9673"/>
        <dbReference type="ChEBI" id="CHEBI:30616"/>
        <dbReference type="ChEBI" id="CHEBI:32682"/>
        <dbReference type="ChEBI" id="CHEBI:33019"/>
        <dbReference type="ChEBI" id="CHEBI:78442"/>
        <dbReference type="ChEBI" id="CHEBI:78513"/>
        <dbReference type="ChEBI" id="CHEBI:456215"/>
        <dbReference type="EC" id="6.1.1.19"/>
    </reaction>
</comment>
<comment type="subunit">
    <text evidence="1">Monomer.</text>
</comment>
<comment type="subcellular location">
    <subcellularLocation>
        <location evidence="1">Cytoplasm</location>
    </subcellularLocation>
</comment>
<comment type="similarity">
    <text evidence="1">Belongs to the class-I aminoacyl-tRNA synthetase family.</text>
</comment>
<gene>
    <name evidence="1" type="primary">argS</name>
    <name type="ordered locus">Sde_2379</name>
</gene>
<evidence type="ECO:0000255" key="1">
    <source>
        <dbReference type="HAMAP-Rule" id="MF_00123"/>
    </source>
</evidence>